<organism>
    <name type="scientific">Caenorhabditis elegans</name>
    <dbReference type="NCBI Taxonomy" id="6239"/>
    <lineage>
        <taxon>Eukaryota</taxon>
        <taxon>Metazoa</taxon>
        <taxon>Ecdysozoa</taxon>
        <taxon>Nematoda</taxon>
        <taxon>Chromadorea</taxon>
        <taxon>Rhabditida</taxon>
        <taxon>Rhabditina</taxon>
        <taxon>Rhabditomorpha</taxon>
        <taxon>Rhabditoidea</taxon>
        <taxon>Rhabditidae</taxon>
        <taxon>Peloderinae</taxon>
        <taxon>Caenorhabditis</taxon>
    </lineage>
</organism>
<sequence length="180" mass="20959">MPTKALGETLNEYVVVGRKIPTEKEPVTPIWKMQIFATNHVIAKSRFWYFVSMLRRVKKANGEILSIKQVFEKNPGTVKNYGVWLKYDSRTGHHNMYREYRDTTVAGAVTQCYRDMGARHRAQADRIHILKVQTVKAEDTKRAGIKMFHDAKIRFPLPHRVTKRKNLSVFTTARQNTHFA</sequence>
<dbReference type="EMBL" id="FO081039">
    <property type="protein sequence ID" value="CCD68709.1"/>
    <property type="molecule type" value="Genomic_DNA"/>
</dbReference>
<dbReference type="PIR" id="B88677">
    <property type="entry name" value="B88677"/>
</dbReference>
<dbReference type="PIR" id="T32612">
    <property type="entry name" value="T32612"/>
</dbReference>
<dbReference type="RefSeq" id="NP_001294214.1">
    <property type="nucleotide sequence ID" value="NM_001307285.5"/>
</dbReference>
<dbReference type="PDB" id="9BH5">
    <property type="method" value="EM"/>
    <property type="resolution" value="2.63 A"/>
    <property type="chains" value="CS=1-180"/>
</dbReference>
<dbReference type="PDB" id="9CAI">
    <property type="method" value="EM"/>
    <property type="resolution" value="2.59 A"/>
    <property type="chains" value="CS=1-180"/>
</dbReference>
<dbReference type="PDBsum" id="9BH5"/>
<dbReference type="PDBsum" id="9CAI"/>
<dbReference type="EMDB" id="EMD-44533"/>
<dbReference type="EMDB" id="EMD-45392"/>
<dbReference type="SMR" id="O44480"/>
<dbReference type="FunCoup" id="O44480">
    <property type="interactions" value="1904"/>
</dbReference>
<dbReference type="STRING" id="6239.E04A4.8.1"/>
<dbReference type="PaxDb" id="6239-E04A4.8"/>
<dbReference type="PeptideAtlas" id="O44480"/>
<dbReference type="EnsemblMetazoa" id="E04A4.8.1">
    <property type="protein sequence ID" value="E04A4.8.1"/>
    <property type="gene ID" value="WBGene00004432"/>
</dbReference>
<dbReference type="GeneID" id="24104384"/>
<dbReference type="KEGG" id="cel:CELE_E04A4.8"/>
<dbReference type="UCSC" id="E04A4.8.1">
    <property type="organism name" value="c. elegans"/>
</dbReference>
<dbReference type="AGR" id="WB:WBGene00004432"/>
<dbReference type="CTD" id="24104384"/>
<dbReference type="WormBase" id="E04A4.8">
    <property type="protein sequence ID" value="CE21392"/>
    <property type="gene ID" value="WBGene00004432"/>
    <property type="gene designation" value="rpl-18A"/>
</dbReference>
<dbReference type="eggNOG" id="KOG0829">
    <property type="taxonomic scope" value="Eukaryota"/>
</dbReference>
<dbReference type="GeneTree" id="ENSGT00390000015797"/>
<dbReference type="HOGENOM" id="CLU_080773_1_1_1"/>
<dbReference type="InParanoid" id="O44480"/>
<dbReference type="OMA" id="CIFAKND"/>
<dbReference type="OrthoDB" id="1294322at2759"/>
<dbReference type="PhylomeDB" id="O44480"/>
<dbReference type="Reactome" id="R-CEL-156827">
    <property type="pathway name" value="L13a-mediated translational silencing of Ceruloplasmin expression"/>
</dbReference>
<dbReference type="Reactome" id="R-CEL-1799339">
    <property type="pathway name" value="SRP-dependent cotranslational protein targeting to membrane"/>
</dbReference>
<dbReference type="Reactome" id="R-CEL-72689">
    <property type="pathway name" value="Formation of a pool of free 40S subunits"/>
</dbReference>
<dbReference type="Reactome" id="R-CEL-72706">
    <property type="pathway name" value="GTP hydrolysis and joining of the 60S ribosomal subunit"/>
</dbReference>
<dbReference type="Reactome" id="R-CEL-975956">
    <property type="pathway name" value="Nonsense Mediated Decay (NMD) independent of the Exon Junction Complex (EJC)"/>
</dbReference>
<dbReference type="Reactome" id="R-CEL-975957">
    <property type="pathway name" value="Nonsense Mediated Decay (NMD) enhanced by the Exon Junction Complex (EJC)"/>
</dbReference>
<dbReference type="PRO" id="PR:O44480"/>
<dbReference type="Proteomes" id="UP000001940">
    <property type="component" value="Chromosome IV"/>
</dbReference>
<dbReference type="Bgee" id="WBGene00004432">
    <property type="expression patterns" value="Expressed in larva and 3 other cell types or tissues"/>
</dbReference>
<dbReference type="GO" id="GO:0022625">
    <property type="term" value="C:cytosolic large ribosomal subunit"/>
    <property type="evidence" value="ECO:0000318"/>
    <property type="project" value="GO_Central"/>
</dbReference>
<dbReference type="GO" id="GO:0003735">
    <property type="term" value="F:structural constituent of ribosome"/>
    <property type="evidence" value="ECO:0000318"/>
    <property type="project" value="GO_Central"/>
</dbReference>
<dbReference type="GO" id="GO:0002181">
    <property type="term" value="P:cytoplasmic translation"/>
    <property type="evidence" value="ECO:0000318"/>
    <property type="project" value="GO_Central"/>
</dbReference>
<dbReference type="FunFam" id="3.10.20.10:FF:000001">
    <property type="entry name" value="60S ribosomal protein L18a"/>
    <property type="match status" value="1"/>
</dbReference>
<dbReference type="FunFam" id="3.10.20.10:FF:000002">
    <property type="entry name" value="60S ribosomal protein L18a"/>
    <property type="match status" value="1"/>
</dbReference>
<dbReference type="Gene3D" id="3.10.20.10">
    <property type="match status" value="2"/>
</dbReference>
<dbReference type="HAMAP" id="MF_00273">
    <property type="entry name" value="Ribosomal_eL20"/>
    <property type="match status" value="1"/>
</dbReference>
<dbReference type="InterPro" id="IPR028877">
    <property type="entry name" value="Ribosomal_eL20"/>
</dbReference>
<dbReference type="InterPro" id="IPR023573">
    <property type="entry name" value="Ribosomal_eL20_dom"/>
</dbReference>
<dbReference type="InterPro" id="IPR021138">
    <property type="entry name" value="Ribosomal_eL20_eukaryotes"/>
</dbReference>
<dbReference type="PANTHER" id="PTHR10052">
    <property type="entry name" value="60S RIBOSOMAL PROTEIN L18A"/>
    <property type="match status" value="1"/>
</dbReference>
<dbReference type="Pfam" id="PF01775">
    <property type="entry name" value="Ribosomal_L18A"/>
    <property type="match status" value="1"/>
</dbReference>
<dbReference type="PIRSF" id="PIRSF002190">
    <property type="entry name" value="Ribosomal_L18a"/>
    <property type="match status" value="1"/>
</dbReference>
<dbReference type="SUPFAM" id="SSF160374">
    <property type="entry name" value="RplX-like"/>
    <property type="match status" value="1"/>
</dbReference>
<proteinExistence type="evidence at protein level"/>
<name>RL18A_CAEEL</name>
<keyword id="KW-0002">3D-structure</keyword>
<keyword id="KW-1185">Reference proteome</keyword>
<keyword id="KW-0687">Ribonucleoprotein</keyword>
<keyword id="KW-0689">Ribosomal protein</keyword>
<protein>
    <recommendedName>
        <fullName evidence="1">Large ribosomal subunit protein eL20</fullName>
    </recommendedName>
    <alternativeName>
        <fullName>60S ribosomal protein L18a</fullName>
    </alternativeName>
</protein>
<accession>O44480</accession>
<reference key="1">
    <citation type="journal article" date="1998" name="Science">
        <title>Genome sequence of the nematode C. elegans: a platform for investigating biology.</title>
        <authorList>
            <consortium name="The C. elegans sequencing consortium"/>
        </authorList>
    </citation>
    <scope>NUCLEOTIDE SEQUENCE [LARGE SCALE GENOMIC DNA]</scope>
    <source>
        <strain>Bristol N2</strain>
    </source>
</reference>
<evidence type="ECO:0000305" key="1"/>
<evidence type="ECO:0000312" key="2">
    <source>
        <dbReference type="WormBase" id="E04A4.8"/>
    </source>
</evidence>
<feature type="chain" id="PRO_0000213931" description="Large ribosomal subunit protein eL20">
    <location>
        <begin position="1"/>
        <end position="180"/>
    </location>
</feature>
<comment type="similarity">
    <text evidence="1">Belongs to the eukaryotic ribosomal protein eL20 family.</text>
</comment>
<gene>
    <name evidence="2" type="primary">rpl-18A</name>
    <name evidence="2" type="ORF">E04A4.8</name>
</gene>